<reference key="1">
    <citation type="journal article" date="1984" name="Proc. Natl. Acad. Sci. U.S.A.">
        <title>The complete cDNA and deduced amino acid sequence of a type II mouse epidermal keratin of 60,000 Da: analysis of sequence differences between type I and type II keratins.</title>
        <authorList>
            <person name="Steinert P.M."/>
            <person name="Parry D.A.D."/>
            <person name="Racoosin E.L."/>
            <person name="Idler W.W."/>
            <person name="Steven A.C."/>
            <person name="Trus B.L."/>
            <person name="Roop D.R."/>
        </authorList>
    </citation>
    <scope>NUCLEOTIDE SEQUENCE [MRNA]</scope>
    <source>
        <tissue>Epidermis</tissue>
    </source>
</reference>
<reference key="2">
    <citation type="journal article" date="1998" name="Genomics">
        <title>The two functional keratin 6 genes of mouse are differentially regulated and evolved independently from their human orthologs.</title>
        <authorList>
            <person name="Takahashi K."/>
            <person name="Yan B."/>
            <person name="Yamanishi K."/>
            <person name="Imamura S."/>
            <person name="Coulombe P.A."/>
        </authorList>
    </citation>
    <scope>NUCLEOTIDE SEQUENCE [GENOMIC DNA]</scope>
    <scope>TISSUE SPECIFICITY</scope>
    <scope>INDUCTION</scope>
    <source>
        <strain>129/Sv</strain>
        <tissue>Skin</tissue>
    </source>
</reference>
<reference key="3">
    <citation type="journal article" date="2004" name="Genome Res.">
        <title>The status, quality, and expansion of the NIH full-length cDNA project: the Mammalian Gene Collection (MGC).</title>
        <authorList>
            <consortium name="The MGC Project Team"/>
        </authorList>
    </citation>
    <scope>NUCLEOTIDE SEQUENCE [LARGE SCALE MRNA]</scope>
    <source>
        <tissue>Jaw</tissue>
        <tissue>Limb</tissue>
    </source>
</reference>
<reference key="4">
    <citation type="journal article" date="1991" name="Carcinogenesis">
        <title>Identification of a cloned sequence activated during multi-stage carcinogenesis in mouse skin.</title>
        <authorList>
            <person name="Finch J."/>
            <person name="Andrews K."/>
            <person name="Krieg P."/>
            <person name="Furstenberger G."/>
            <person name="Slaga T."/>
            <person name="Ootsuyama A."/>
            <person name="Tanooka H."/>
            <person name="Bowden G.T."/>
        </authorList>
    </citation>
    <scope>NUCLEOTIDE SEQUENCE OF 528-553</scope>
</reference>
<reference key="5">
    <citation type="journal article" date="1996" name="J. Cell Biol.">
        <title>Onset of re-epithelialization after skin injury correlates with a reorganization of keratin filaments in wound edge keratinocytes: defining a potential role for keratin 16.</title>
        <authorList>
            <person name="Paladini R.D."/>
            <person name="Takahashi K."/>
            <person name="Bravo N.S."/>
            <person name="Coulombe P.A."/>
        </authorList>
    </citation>
    <scope>SUBUNIT</scope>
    <scope>INDUCTION</scope>
</reference>
<reference key="6">
    <citation type="journal article" date="2000" name="J. Invest. Dermatol.">
        <title>Analysis of mouse keratin 6a regulatory sequences in transgenic mice reveals constitutive, tissue-specific expression by a keratin 6a minigene.</title>
        <authorList>
            <person name="Mahony D."/>
            <person name="Karunaratne S."/>
            <person name="Cam G."/>
            <person name="Rothnagel J.A."/>
        </authorList>
    </citation>
    <scope>TISSUE SPECIFICITY</scope>
</reference>
<reference key="7">
    <citation type="journal article" date="2000" name="Mol. Cell. Biol.">
        <title>Delayed wound healing in keratin 6a knockout mice.</title>
        <authorList>
            <person name="Wojcik S.M."/>
            <person name="Bundman D.S."/>
            <person name="Roop D.R."/>
        </authorList>
    </citation>
    <scope>FUNCTION</scope>
    <scope>DISRUPTION PHENOTYPE</scope>
    <scope>INDUCTION</scope>
</reference>
<reference key="8">
    <citation type="journal article" date="2010" name="Cell">
        <title>A tissue-specific atlas of mouse protein phosphorylation and expression.</title>
        <authorList>
            <person name="Huttlin E.L."/>
            <person name="Jedrychowski M.P."/>
            <person name="Elias J.E."/>
            <person name="Goswami T."/>
            <person name="Rad R."/>
            <person name="Beausoleil S.A."/>
            <person name="Villen J."/>
            <person name="Haas W."/>
            <person name="Sowa M.E."/>
            <person name="Gygi S.P."/>
        </authorList>
    </citation>
    <scope>IDENTIFICATION BY MASS SPECTROMETRY [LARGE SCALE ANALYSIS]</scope>
    <source>
        <tissue>Brown adipose tissue</tissue>
        <tissue>Liver</tissue>
        <tissue>Lung</tissue>
        <tissue>Pancreas</tissue>
        <tissue>Testis</tissue>
    </source>
</reference>
<reference key="9">
    <citation type="journal article" date="2012" name="J. Cell Biol.">
        <title>A wound-induced keratin inhibits Src activity during keratinocyte migration and tissue repair.</title>
        <authorList>
            <person name="Rotty J.D."/>
            <person name="Coulombe P.A."/>
        </authorList>
    </citation>
    <scope>FUNCTION</scope>
</reference>
<evidence type="ECO:0000250" key="1"/>
<evidence type="ECO:0000255" key="2">
    <source>
        <dbReference type="PROSITE-ProRule" id="PRU01188"/>
    </source>
</evidence>
<evidence type="ECO:0000256" key="3">
    <source>
        <dbReference type="SAM" id="MobiDB-lite"/>
    </source>
</evidence>
<evidence type="ECO:0000269" key="4">
    <source>
    </source>
</evidence>
<evidence type="ECO:0000269" key="5">
    <source>
    </source>
</evidence>
<evidence type="ECO:0000269" key="6">
    <source>
    </source>
</evidence>
<evidence type="ECO:0000269" key="7">
    <source>
    </source>
</evidence>
<evidence type="ECO:0000269" key="8">
    <source>
    </source>
</evidence>
<evidence type="ECO:0000305" key="9"/>
<comment type="function">
    <text evidence="4 6">Epidermis-specific type I keratin involved in wound healing (PubMed:10866680). Involved in the activation of follicular keratinocytes after wounding, while it does not play a major role in keratinocyte proliferation or migration (PubMed:10866680). Participates in the regulation of epithelial migration by inhibiting the activity of SRC during wound repair (PubMed:22529101).</text>
</comment>
<comment type="subunit">
    <text evidence="1 7">Heterodimer of a type I and a type II keratin. KRT6 isomers associate with KRT16 and/or KRT17 (PubMed:8636216). Interacts with TCHP (By similarity).</text>
</comment>
<comment type="tissue specificity">
    <text evidence="5 8">Predominates in the adult trunk skin, tongue, trachea/esophagus and eye. In adult skin, localization is restricted to hair follicles, where it is localized predominantly in the outer root sheath.</text>
</comment>
<comment type="induction">
    <text evidence="4 7 8">With the exception of specific body sites, expression is induced under conditions of epithelial hyperproliferation such as wound healing, certain skin diseases, cancer, and by treatment of the skin with the phorbol ester PMA. Upon wounding, induced in the outer root sheath and the interfollicular epidermis including the basal cell layer (PubMed:10866680).</text>
</comment>
<comment type="disruption phenotype">
    <text evidence="4">Wound healing defects. Delay in reepithelialization from the hair follicle while the healing of full-thickness skin wounds is not impaired.</text>
</comment>
<comment type="miscellaneous">
    <text>There are two types of cytoskeletal and microfibrillar keratin, I (acidic) and II (neutral to basic) (40-55 and 56-70 kDa, respectively).</text>
</comment>
<comment type="similarity">
    <text evidence="2">Belongs to the intermediate filament family.</text>
</comment>
<protein>
    <recommendedName>
        <fullName>Keratin, type II cytoskeletal 6A</fullName>
    </recommendedName>
    <alternativeName>
        <fullName>Cytokeratin-6A</fullName>
        <shortName>CK-6A</shortName>
    </alternativeName>
    <alternativeName>
        <fullName>Keratin-6-alpha</fullName>
        <shortName>mK6-alpha</shortName>
    </alternativeName>
    <alternativeName>
        <fullName>Keratin-6A</fullName>
        <shortName>K6A</shortName>
    </alternativeName>
</protein>
<accession>P50446</accession>
<accession>Q9Z332</accession>
<name>K2C6A_MOUSE</name>
<sequence>MSTKTTIKSQTSHRGYSASSARVPGLNRSGFSSVSVCRSRGSGGSSAMCGGAGFGSRSLYGVGSSKRISIGGGSCGIGGGYGSRFGGSFGIGGGAGSGFGFGGGAGFGGGYGGAGFPVCPPGGIQEVTINQSLLTPLNLQIDPTIQRVRTEEREQIKTLNNKFASFIDKVRFLEQQNKVLDTKWALLQEQGTKTVRQNLEPMFEQYISNLRRQLDSIIGERGRLDSELRNMQDTVEDYKSKYEDEINKRTAAENEFVTLKKDVDAAYMNKVELQAKADSLTDDINFLRALYEAELSQMQTHISDTSVVLSMDNNRSLDLDSIIAEVKAQYEDIAQRSRAEAESWYQTKYEELQVTAGRHGDDLRNTKQEIAEINRMIQRLRSEIDHVKKQCANLQAAIADAEQRGEMALKDARGKLEGLEDALQKAKQDMARLLKEYQELMNVKLALDVEIATYRKLLEGEECRLNGEGVGPVNISVVQSTVSSGYGSAGGASSSLGLGGGSSYSYSSSHGLGGGFSAGSGRAIGGGLSSSGGLSSSTIKYTTTSSSKKSYRQ</sequence>
<proteinExistence type="evidence at protein level"/>
<gene>
    <name type="primary">Krt6a</name>
    <name type="synonym">Ker2</name>
    <name type="synonym">Krt2-6</name>
    <name type="synonym">Krt2-6a</name>
    <name type="synonym">Krt6</name>
</gene>
<organism>
    <name type="scientific">Mus musculus</name>
    <name type="common">Mouse</name>
    <dbReference type="NCBI Taxonomy" id="10090"/>
    <lineage>
        <taxon>Eukaryota</taxon>
        <taxon>Metazoa</taxon>
        <taxon>Chordata</taxon>
        <taxon>Craniata</taxon>
        <taxon>Vertebrata</taxon>
        <taxon>Euteleostomi</taxon>
        <taxon>Mammalia</taxon>
        <taxon>Eutheria</taxon>
        <taxon>Euarchontoglires</taxon>
        <taxon>Glires</taxon>
        <taxon>Rodentia</taxon>
        <taxon>Myomorpha</taxon>
        <taxon>Muroidea</taxon>
        <taxon>Muridae</taxon>
        <taxon>Murinae</taxon>
        <taxon>Mus</taxon>
        <taxon>Mus</taxon>
    </lineage>
</organism>
<dbReference type="EMBL" id="K02108">
    <property type="protein sequence ID" value="AAA39395.1"/>
    <property type="molecule type" value="mRNA"/>
</dbReference>
<dbReference type="EMBL" id="AB012033">
    <property type="protein sequence ID" value="BAA34178.1"/>
    <property type="molecule type" value="Genomic_DNA"/>
</dbReference>
<dbReference type="EMBL" id="BC080820">
    <property type="protein sequence ID" value="AAH80820.1"/>
    <property type="molecule type" value="mRNA"/>
</dbReference>
<dbReference type="CCDS" id="CCDS27860.1"/>
<dbReference type="PIR" id="I59009">
    <property type="entry name" value="I59009"/>
</dbReference>
<dbReference type="RefSeq" id="NP_032502.3">
    <property type="nucleotide sequence ID" value="NM_008476.3"/>
</dbReference>
<dbReference type="SMR" id="P50446"/>
<dbReference type="BioGRID" id="201035">
    <property type="interactions" value="18"/>
</dbReference>
<dbReference type="FunCoup" id="P50446">
    <property type="interactions" value="42"/>
</dbReference>
<dbReference type="IntAct" id="P50446">
    <property type="interactions" value="1"/>
</dbReference>
<dbReference type="MINT" id="P50446"/>
<dbReference type="STRING" id="10090.ENSMUSP00000023788"/>
<dbReference type="GlyGen" id="P50446">
    <property type="glycosylation" value="1 site, 1 O-linked glycan (1 site)"/>
</dbReference>
<dbReference type="iPTMnet" id="P50446"/>
<dbReference type="PhosphoSitePlus" id="P50446"/>
<dbReference type="SwissPalm" id="P50446"/>
<dbReference type="CPTAC" id="non-CPTAC-4031"/>
<dbReference type="jPOST" id="P50446"/>
<dbReference type="PaxDb" id="10090-ENSMUSP00000023788"/>
<dbReference type="PeptideAtlas" id="P50446"/>
<dbReference type="ProteomicsDB" id="268943"/>
<dbReference type="DNASU" id="16687"/>
<dbReference type="Ensembl" id="ENSMUST00000023788.8">
    <property type="protein sequence ID" value="ENSMUSP00000023788.7"/>
    <property type="gene ID" value="ENSMUSG00000058354.8"/>
</dbReference>
<dbReference type="GeneID" id="16687"/>
<dbReference type="KEGG" id="mmu:16687"/>
<dbReference type="UCSC" id="uc007xtv.1">
    <property type="organism name" value="mouse"/>
</dbReference>
<dbReference type="AGR" id="MGI:1100845"/>
<dbReference type="CTD" id="3853"/>
<dbReference type="MGI" id="MGI:1100845">
    <property type="gene designation" value="Krt6a"/>
</dbReference>
<dbReference type="VEuPathDB" id="HostDB:ENSMUSG00000058354"/>
<dbReference type="eggNOG" id="ENOG502QURK">
    <property type="taxonomic scope" value="Eukaryota"/>
</dbReference>
<dbReference type="GeneTree" id="ENSGT00940000154600"/>
<dbReference type="HOGENOM" id="CLU_012560_6_1_1"/>
<dbReference type="InParanoid" id="P50446"/>
<dbReference type="OMA" id="RWVHDAM"/>
<dbReference type="OrthoDB" id="2441647at2759"/>
<dbReference type="PhylomeDB" id="P50446"/>
<dbReference type="TreeFam" id="TF317854"/>
<dbReference type="Reactome" id="R-MMU-6805567">
    <property type="pathway name" value="Keratinization"/>
</dbReference>
<dbReference type="Reactome" id="R-MMU-6809371">
    <property type="pathway name" value="Formation of the cornified envelope"/>
</dbReference>
<dbReference type="BioGRID-ORCS" id="16687">
    <property type="hits" value="2 hits in 60 CRISPR screens"/>
</dbReference>
<dbReference type="ChiTaRS" id="Krt6a">
    <property type="organism name" value="mouse"/>
</dbReference>
<dbReference type="PRO" id="PR:P50446"/>
<dbReference type="Proteomes" id="UP000000589">
    <property type="component" value="Chromosome 15"/>
</dbReference>
<dbReference type="RNAct" id="P50446">
    <property type="molecule type" value="protein"/>
</dbReference>
<dbReference type="Bgee" id="ENSMUSG00000058354">
    <property type="expression patterns" value="Expressed in substantia propria of cornea and 87 other cell types or tissues"/>
</dbReference>
<dbReference type="GO" id="GO:0045095">
    <property type="term" value="C:keratin filament"/>
    <property type="evidence" value="ECO:0007669"/>
    <property type="project" value="InterPro"/>
</dbReference>
<dbReference type="GO" id="GO:0061844">
    <property type="term" value="P:antimicrobial humoral immune response mediated by antimicrobial peptide"/>
    <property type="evidence" value="ECO:0000315"/>
    <property type="project" value="UniProtKB"/>
</dbReference>
<dbReference type="GO" id="GO:0050830">
    <property type="term" value="P:defense response to Gram-positive bacterium"/>
    <property type="evidence" value="ECO:0000315"/>
    <property type="project" value="UniProtKB"/>
</dbReference>
<dbReference type="GO" id="GO:0045109">
    <property type="term" value="P:intermediate filament organization"/>
    <property type="evidence" value="ECO:0000316"/>
    <property type="project" value="MGI"/>
</dbReference>
<dbReference type="GO" id="GO:0031424">
    <property type="term" value="P:keratinization"/>
    <property type="evidence" value="ECO:0000316"/>
    <property type="project" value="MGI"/>
</dbReference>
<dbReference type="GO" id="GO:0002009">
    <property type="term" value="P:morphogenesis of an epithelium"/>
    <property type="evidence" value="ECO:0000315"/>
    <property type="project" value="UniProtKB"/>
</dbReference>
<dbReference type="GO" id="GO:0016055">
    <property type="term" value="P:Wnt signaling pathway"/>
    <property type="evidence" value="ECO:0000314"/>
    <property type="project" value="MGI"/>
</dbReference>
<dbReference type="GO" id="GO:0042060">
    <property type="term" value="P:wound healing"/>
    <property type="evidence" value="ECO:0000315"/>
    <property type="project" value="UniProtKB"/>
</dbReference>
<dbReference type="FunFam" id="1.20.5.1160:FF:000001">
    <property type="entry name" value="Keratin type II"/>
    <property type="match status" value="1"/>
</dbReference>
<dbReference type="FunFam" id="1.20.5.170:FF:000004">
    <property type="entry name" value="Keratin, type II cytoskeletal 5"/>
    <property type="match status" value="1"/>
</dbReference>
<dbReference type="FunFam" id="1.20.5.500:FF:000001">
    <property type="entry name" value="Type II keratin 23"/>
    <property type="match status" value="1"/>
</dbReference>
<dbReference type="Gene3D" id="1.20.5.170">
    <property type="match status" value="1"/>
</dbReference>
<dbReference type="Gene3D" id="1.20.5.500">
    <property type="entry name" value="Single helix bin"/>
    <property type="match status" value="1"/>
</dbReference>
<dbReference type="Gene3D" id="1.20.5.1160">
    <property type="entry name" value="Vasodilator-stimulated phosphoprotein"/>
    <property type="match status" value="1"/>
</dbReference>
<dbReference type="InterPro" id="IPR018039">
    <property type="entry name" value="IF_conserved"/>
</dbReference>
<dbReference type="InterPro" id="IPR039008">
    <property type="entry name" value="IF_rod_dom"/>
</dbReference>
<dbReference type="InterPro" id="IPR032444">
    <property type="entry name" value="Keratin_2_head"/>
</dbReference>
<dbReference type="InterPro" id="IPR003054">
    <property type="entry name" value="Keratin_II"/>
</dbReference>
<dbReference type="PANTHER" id="PTHR45616">
    <property type="entry name" value="GATA-TYPE DOMAIN-CONTAINING PROTEIN"/>
    <property type="match status" value="1"/>
</dbReference>
<dbReference type="PANTHER" id="PTHR45616:SF39">
    <property type="entry name" value="KERATIN, TYPE II CYTOSKELETAL 6A-RELATED"/>
    <property type="match status" value="1"/>
</dbReference>
<dbReference type="Pfam" id="PF00038">
    <property type="entry name" value="Filament"/>
    <property type="match status" value="1"/>
</dbReference>
<dbReference type="Pfam" id="PF16208">
    <property type="entry name" value="Keratin_2_head"/>
    <property type="match status" value="1"/>
</dbReference>
<dbReference type="PRINTS" id="PR01276">
    <property type="entry name" value="TYPE2KERATIN"/>
</dbReference>
<dbReference type="SMART" id="SM01391">
    <property type="entry name" value="Filament"/>
    <property type="match status" value="1"/>
</dbReference>
<dbReference type="SUPFAM" id="SSF64593">
    <property type="entry name" value="Intermediate filament protein, coiled coil region"/>
    <property type="match status" value="3"/>
</dbReference>
<dbReference type="PROSITE" id="PS00226">
    <property type="entry name" value="IF_ROD_1"/>
    <property type="match status" value="1"/>
</dbReference>
<dbReference type="PROSITE" id="PS51842">
    <property type="entry name" value="IF_ROD_2"/>
    <property type="match status" value="1"/>
</dbReference>
<keyword id="KW-0175">Coiled coil</keyword>
<keyword id="KW-0403">Intermediate filament</keyword>
<keyword id="KW-0416">Keratin</keyword>
<keyword id="KW-1185">Reference proteome</keyword>
<feature type="chain" id="PRO_0000063736" description="Keratin, type II cytoskeletal 6A">
    <location>
        <begin position="1"/>
        <end position="553"/>
    </location>
</feature>
<feature type="domain" description="IF rod" evidence="2">
    <location>
        <begin position="152"/>
        <end position="465"/>
    </location>
</feature>
<feature type="region of interest" description="Head">
    <location>
        <begin position="1"/>
        <end position="151"/>
    </location>
</feature>
<feature type="region of interest" description="Disordered" evidence="3">
    <location>
        <begin position="1"/>
        <end position="21"/>
    </location>
</feature>
<feature type="region of interest" description="Coil 1A">
    <location>
        <begin position="152"/>
        <end position="187"/>
    </location>
</feature>
<feature type="region of interest" description="Linker 1">
    <location>
        <begin position="188"/>
        <end position="206"/>
    </location>
</feature>
<feature type="region of interest" description="Coil 1B">
    <location>
        <begin position="207"/>
        <end position="298"/>
    </location>
</feature>
<feature type="region of interest" description="Linker 12">
    <location>
        <begin position="299"/>
        <end position="322"/>
    </location>
</feature>
<feature type="region of interest" description="Coil 2">
    <location>
        <begin position="323"/>
        <end position="461"/>
    </location>
</feature>
<feature type="region of interest" description="Tail">
    <location>
        <begin position="462"/>
        <end position="553"/>
    </location>
</feature>
<feature type="region of interest" description="Disordered" evidence="3">
    <location>
        <begin position="528"/>
        <end position="553"/>
    </location>
</feature>
<feature type="compositionally biased region" description="Polar residues" evidence="3">
    <location>
        <begin position="1"/>
        <end position="20"/>
    </location>
</feature>
<feature type="compositionally biased region" description="Low complexity" evidence="3">
    <location>
        <begin position="531"/>
        <end position="553"/>
    </location>
</feature>
<feature type="site" description="Stutter">
    <location>
        <position position="403"/>
    </location>
</feature>
<feature type="sequence conflict" description="In Ref. 1; AAA39395." evidence="9" ref="1">
    <original>P</original>
    <variation>L</variation>
    <location>
        <position position="24"/>
    </location>
</feature>
<feature type="sequence conflict" description="In Ref. 1; AAA39395." evidence="9" ref="1">
    <original>P</original>
    <variation>L</variation>
    <location>
        <position position="121"/>
    </location>
</feature>
<feature type="sequence conflict" description="In Ref. 1; AAA39395." evidence="9" ref="1">
    <original>L</original>
    <variation>M</variation>
    <location>
        <position position="173"/>
    </location>
</feature>
<feature type="sequence conflict" description="In Ref. 1; AAA39395." evidence="9" ref="1">
    <original>L</original>
    <variation>M</variation>
    <location>
        <position position="180"/>
    </location>
</feature>
<feature type="sequence conflict" description="In Ref. 1; AAA39395." evidence="9" ref="1">
    <original>G</original>
    <variation>D</variation>
    <location>
        <position position="191"/>
    </location>
</feature>
<feature type="sequence conflict" description="In Ref. 1; AAA39395." evidence="9" ref="1">
    <original>L</original>
    <variation>M</variation>
    <location>
        <position position="199"/>
    </location>
</feature>
<feature type="sequence conflict" description="In Ref. 1; AAA39395." evidence="9" ref="1">
    <original>LD</original>
    <variation>MN</variation>
    <location>
        <begin position="224"/>
        <end position="225"/>
    </location>
</feature>
<feature type="sequence conflict" description="In Ref. 1; AAA39395." evidence="9" ref="1">
    <original>DTVEDYKS</original>
    <variation>ELVEELRN</variation>
    <location>
        <begin position="233"/>
        <end position="240"/>
    </location>
</feature>
<feature type="sequence conflict" description="In Ref. 1; AAA39395." evidence="9" ref="1">
    <original>A</original>
    <variation>D</variation>
    <location>
        <position position="251"/>
    </location>
</feature>
<feature type="sequence conflict" description="In Ref. 1; AAA39395." evidence="9" ref="1">
    <original>D</original>
    <variation>V</variation>
    <location>
        <position position="312"/>
    </location>
</feature>
<feature type="sequence conflict" description="In Ref. 1; AAA39395." evidence="9" ref="1">
    <original>D</original>
    <variation>V</variation>
    <location>
        <position position="318"/>
    </location>
</feature>
<feature type="sequence conflict" description="In Ref. 1; AAA39395." evidence="9" ref="1">
    <original>YED</original>
    <variation>FEV</variation>
    <location>
        <begin position="330"/>
        <end position="332"/>
    </location>
</feature>
<feature type="sequence conflict" description="In Ref. 1; AAA39395." evidence="9" ref="1">
    <original>W</original>
    <variation>L</variation>
    <location>
        <position position="344"/>
    </location>
</feature>
<feature type="sequence conflict" description="In Ref. 1; AAA39395." evidence="9" ref="1">
    <original>R</original>
    <variation>M</variation>
    <location>
        <position position="432"/>
    </location>
</feature>
<feature type="sequence conflict" description="In Ref. 1; AAA39395." evidence="9" ref="1">
    <original>Q</original>
    <variation>H</variation>
    <location>
        <position position="438"/>
    </location>
</feature>
<feature type="sequence conflict" description="In Ref. 1; AAA39395." evidence="9" ref="1">
    <original>L</original>
    <variation>M</variation>
    <location>
        <position position="498"/>
    </location>
</feature>